<accession>B2HSZ3</accession>
<dbReference type="EMBL" id="CP000854">
    <property type="protein sequence ID" value="ACC41167.1"/>
    <property type="molecule type" value="Genomic_DNA"/>
</dbReference>
<dbReference type="RefSeq" id="WP_012394437.1">
    <property type="nucleotide sequence ID" value="NC_010612.1"/>
</dbReference>
<dbReference type="SMR" id="B2HSZ3"/>
<dbReference type="STRING" id="216594.MMAR_2725"/>
<dbReference type="KEGG" id="mmi:MMAR_2725"/>
<dbReference type="eggNOG" id="COG0830">
    <property type="taxonomic scope" value="Bacteria"/>
</dbReference>
<dbReference type="HOGENOM" id="CLU_049215_3_0_11"/>
<dbReference type="OrthoDB" id="3382047at2"/>
<dbReference type="Proteomes" id="UP000001190">
    <property type="component" value="Chromosome"/>
</dbReference>
<dbReference type="GO" id="GO:0005737">
    <property type="term" value="C:cytoplasm"/>
    <property type="evidence" value="ECO:0007669"/>
    <property type="project" value="UniProtKB-SubCell"/>
</dbReference>
<dbReference type="GO" id="GO:0016151">
    <property type="term" value="F:nickel cation binding"/>
    <property type="evidence" value="ECO:0007669"/>
    <property type="project" value="UniProtKB-UniRule"/>
</dbReference>
<dbReference type="Gene3D" id="1.10.4190.10">
    <property type="entry name" value="Urease accessory protein UreF"/>
    <property type="match status" value="1"/>
</dbReference>
<dbReference type="HAMAP" id="MF_01385">
    <property type="entry name" value="UreF"/>
    <property type="match status" value="1"/>
</dbReference>
<dbReference type="InterPro" id="IPR002639">
    <property type="entry name" value="UreF"/>
</dbReference>
<dbReference type="InterPro" id="IPR038277">
    <property type="entry name" value="UreF_sf"/>
</dbReference>
<dbReference type="PANTHER" id="PTHR33620">
    <property type="entry name" value="UREASE ACCESSORY PROTEIN F"/>
    <property type="match status" value="1"/>
</dbReference>
<dbReference type="PANTHER" id="PTHR33620:SF1">
    <property type="entry name" value="UREASE ACCESSORY PROTEIN F"/>
    <property type="match status" value="1"/>
</dbReference>
<dbReference type="Pfam" id="PF01730">
    <property type="entry name" value="UreF"/>
    <property type="match status" value="1"/>
</dbReference>
<dbReference type="PIRSF" id="PIRSF009467">
    <property type="entry name" value="Ureas_acces_UreF"/>
    <property type="match status" value="1"/>
</dbReference>
<protein>
    <recommendedName>
        <fullName evidence="1">Urease accessory protein UreF</fullName>
    </recommendedName>
</protein>
<evidence type="ECO:0000255" key="1">
    <source>
        <dbReference type="HAMAP-Rule" id="MF_01385"/>
    </source>
</evidence>
<evidence type="ECO:0000256" key="2">
    <source>
        <dbReference type="SAM" id="MobiDB-lite"/>
    </source>
</evidence>
<feature type="chain" id="PRO_1000145123" description="Urease accessory protein UreF">
    <location>
        <begin position="1"/>
        <end position="211"/>
    </location>
</feature>
<feature type="region of interest" description="Disordered" evidence="2">
    <location>
        <begin position="68"/>
        <end position="93"/>
    </location>
</feature>
<organism>
    <name type="scientific">Mycobacterium marinum (strain ATCC BAA-535 / M)</name>
    <dbReference type="NCBI Taxonomy" id="216594"/>
    <lineage>
        <taxon>Bacteria</taxon>
        <taxon>Bacillati</taxon>
        <taxon>Actinomycetota</taxon>
        <taxon>Actinomycetes</taxon>
        <taxon>Mycobacteriales</taxon>
        <taxon>Mycobacteriaceae</taxon>
        <taxon>Mycobacterium</taxon>
        <taxon>Mycobacterium ulcerans group</taxon>
    </lineage>
</organism>
<keyword id="KW-0143">Chaperone</keyword>
<keyword id="KW-0963">Cytoplasm</keyword>
<keyword id="KW-0996">Nickel insertion</keyword>
<keyword id="KW-1185">Reference proteome</keyword>
<comment type="function">
    <text evidence="1">Required for maturation of urease via the functional incorporation of the urease nickel metallocenter.</text>
</comment>
<comment type="subunit">
    <text evidence="1">UreD, UreF and UreG form a complex that acts as a GTP-hydrolysis-dependent molecular chaperone, activating the urease apoprotein by helping to assemble the nickel containing metallocenter of UreC. The UreE protein probably delivers the nickel.</text>
</comment>
<comment type="subcellular location">
    <subcellularLocation>
        <location evidence="1">Cytoplasm</location>
    </subcellularLocation>
</comment>
<comment type="similarity">
    <text evidence="1">Belongs to the UreF family.</text>
</comment>
<sequence length="211" mass="21979">MTTLAMLLTLADSRLPTGAHVHSGGVEEAITAGLVTNLSSLEAFLKRRIRSHGLVTASIAAAVQRGDLAPDGADRETDARTPSPAARDASRSQGRGLVRLARAIWPEADWDALGAKPHLAVAAGRVGALAGLTPEHLALQLVYTTMTGSATAAQRLLALDPTDVAVLTFQLSELCTTTAAEAAIGLADLSDPLLDTLAQHHAERERPLFAS</sequence>
<proteinExistence type="inferred from homology"/>
<reference key="1">
    <citation type="journal article" date="2008" name="Genome Res.">
        <title>Insights from the complete genome sequence of Mycobacterium marinum on the evolution of Mycobacterium tuberculosis.</title>
        <authorList>
            <person name="Stinear T.P."/>
            <person name="Seemann T."/>
            <person name="Harrison P.F."/>
            <person name="Jenkin G.A."/>
            <person name="Davies J.K."/>
            <person name="Johnson P.D."/>
            <person name="Abdellah Z."/>
            <person name="Arrowsmith C."/>
            <person name="Chillingworth T."/>
            <person name="Churcher C."/>
            <person name="Clarke K."/>
            <person name="Cronin A."/>
            <person name="Davis P."/>
            <person name="Goodhead I."/>
            <person name="Holroyd N."/>
            <person name="Jagels K."/>
            <person name="Lord A."/>
            <person name="Moule S."/>
            <person name="Mungall K."/>
            <person name="Norbertczak H."/>
            <person name="Quail M.A."/>
            <person name="Rabbinowitsch E."/>
            <person name="Walker D."/>
            <person name="White B."/>
            <person name="Whitehead S."/>
            <person name="Small P.L."/>
            <person name="Brosch R."/>
            <person name="Ramakrishnan L."/>
            <person name="Fischbach M.A."/>
            <person name="Parkhill J."/>
            <person name="Cole S.T."/>
        </authorList>
    </citation>
    <scope>NUCLEOTIDE SEQUENCE [LARGE SCALE GENOMIC DNA]</scope>
    <source>
        <strain>ATCC BAA-535 / M</strain>
    </source>
</reference>
<gene>
    <name evidence="1" type="primary">ureF</name>
    <name type="ordered locus">MMAR_2725</name>
</gene>
<name>UREF_MYCMM</name>